<keyword id="KW-0030">Aminoacyl-tRNA synthetase</keyword>
<keyword id="KW-0067">ATP-binding</keyword>
<keyword id="KW-0963">Cytoplasm</keyword>
<keyword id="KW-0436">Ligase</keyword>
<keyword id="KW-0460">Magnesium</keyword>
<keyword id="KW-0479">Metal-binding</keyword>
<keyword id="KW-0547">Nucleotide-binding</keyword>
<keyword id="KW-0648">Protein biosynthesis</keyword>
<keyword id="KW-1185">Reference proteome</keyword>
<keyword id="KW-0694">RNA-binding</keyword>
<keyword id="KW-0820">tRNA-binding</keyword>
<protein>
    <recommendedName>
        <fullName evidence="1">Phenylalanine--tRNA ligase beta subunit</fullName>
        <ecNumber evidence="1">6.1.1.20</ecNumber>
    </recommendedName>
    <alternativeName>
        <fullName evidence="1">Phenylalanyl-tRNA synthetase beta subunit</fullName>
        <shortName evidence="1">PheRS</shortName>
    </alternativeName>
</protein>
<proteinExistence type="inferred from homology"/>
<feature type="chain" id="PRO_0000126888" description="Phenylalanine--tRNA ligase beta subunit">
    <location>
        <begin position="1"/>
        <end position="804"/>
    </location>
</feature>
<feature type="domain" description="tRNA-binding" evidence="1">
    <location>
        <begin position="40"/>
        <end position="155"/>
    </location>
</feature>
<feature type="domain" description="B5" evidence="1">
    <location>
        <begin position="409"/>
        <end position="484"/>
    </location>
</feature>
<feature type="domain" description="FDX-ACB" evidence="1">
    <location>
        <begin position="710"/>
        <end position="803"/>
    </location>
</feature>
<feature type="binding site" evidence="1">
    <location>
        <position position="462"/>
    </location>
    <ligand>
        <name>Mg(2+)</name>
        <dbReference type="ChEBI" id="CHEBI:18420"/>
        <note>shared with alpha subunit</note>
    </ligand>
</feature>
<feature type="binding site" evidence="1">
    <location>
        <position position="468"/>
    </location>
    <ligand>
        <name>Mg(2+)</name>
        <dbReference type="ChEBI" id="CHEBI:18420"/>
        <note>shared with alpha subunit</note>
    </ligand>
</feature>
<feature type="binding site" evidence="1">
    <location>
        <position position="471"/>
    </location>
    <ligand>
        <name>Mg(2+)</name>
        <dbReference type="ChEBI" id="CHEBI:18420"/>
        <note>shared with alpha subunit</note>
    </ligand>
</feature>
<feature type="binding site" evidence="1">
    <location>
        <position position="472"/>
    </location>
    <ligand>
        <name>Mg(2+)</name>
        <dbReference type="ChEBI" id="CHEBI:18420"/>
        <note>shared with alpha subunit</note>
    </ligand>
</feature>
<name>SYFB_GEOKA</name>
<evidence type="ECO:0000255" key="1">
    <source>
        <dbReference type="HAMAP-Rule" id="MF_00283"/>
    </source>
</evidence>
<comment type="catalytic activity">
    <reaction evidence="1">
        <text>tRNA(Phe) + L-phenylalanine + ATP = L-phenylalanyl-tRNA(Phe) + AMP + diphosphate + H(+)</text>
        <dbReference type="Rhea" id="RHEA:19413"/>
        <dbReference type="Rhea" id="RHEA-COMP:9668"/>
        <dbReference type="Rhea" id="RHEA-COMP:9699"/>
        <dbReference type="ChEBI" id="CHEBI:15378"/>
        <dbReference type="ChEBI" id="CHEBI:30616"/>
        <dbReference type="ChEBI" id="CHEBI:33019"/>
        <dbReference type="ChEBI" id="CHEBI:58095"/>
        <dbReference type="ChEBI" id="CHEBI:78442"/>
        <dbReference type="ChEBI" id="CHEBI:78531"/>
        <dbReference type="ChEBI" id="CHEBI:456215"/>
        <dbReference type="EC" id="6.1.1.20"/>
    </reaction>
</comment>
<comment type="cofactor">
    <cofactor evidence="1">
        <name>Mg(2+)</name>
        <dbReference type="ChEBI" id="CHEBI:18420"/>
    </cofactor>
    <text evidence="1">Binds 2 magnesium ions per tetramer.</text>
</comment>
<comment type="subunit">
    <text evidence="1">Tetramer of two alpha and two beta subunits.</text>
</comment>
<comment type="subcellular location">
    <subcellularLocation>
        <location evidence="1">Cytoplasm</location>
    </subcellularLocation>
</comment>
<comment type="similarity">
    <text evidence="1">Belongs to the phenylalanyl-tRNA synthetase beta subunit family. Type 1 subfamily.</text>
</comment>
<dbReference type="EC" id="6.1.1.20" evidence="1"/>
<dbReference type="EMBL" id="BA000043">
    <property type="protein sequence ID" value="BAD76991.1"/>
    <property type="molecule type" value="Genomic_DNA"/>
</dbReference>
<dbReference type="RefSeq" id="WP_011232180.1">
    <property type="nucleotide sequence ID" value="NC_006510.1"/>
</dbReference>
<dbReference type="SMR" id="Q5KWE5"/>
<dbReference type="STRING" id="235909.GK2706"/>
<dbReference type="KEGG" id="gka:GK2706"/>
<dbReference type="PATRIC" id="fig|235909.7.peg.2890"/>
<dbReference type="eggNOG" id="COG0072">
    <property type="taxonomic scope" value="Bacteria"/>
</dbReference>
<dbReference type="eggNOG" id="COG0073">
    <property type="taxonomic scope" value="Bacteria"/>
</dbReference>
<dbReference type="HOGENOM" id="CLU_016891_0_0_9"/>
<dbReference type="Proteomes" id="UP000001172">
    <property type="component" value="Chromosome"/>
</dbReference>
<dbReference type="GO" id="GO:0009328">
    <property type="term" value="C:phenylalanine-tRNA ligase complex"/>
    <property type="evidence" value="ECO:0007669"/>
    <property type="project" value="TreeGrafter"/>
</dbReference>
<dbReference type="GO" id="GO:0005524">
    <property type="term" value="F:ATP binding"/>
    <property type="evidence" value="ECO:0007669"/>
    <property type="project" value="UniProtKB-UniRule"/>
</dbReference>
<dbReference type="GO" id="GO:0140096">
    <property type="term" value="F:catalytic activity, acting on a protein"/>
    <property type="evidence" value="ECO:0007669"/>
    <property type="project" value="UniProtKB-ARBA"/>
</dbReference>
<dbReference type="GO" id="GO:0000287">
    <property type="term" value="F:magnesium ion binding"/>
    <property type="evidence" value="ECO:0007669"/>
    <property type="project" value="UniProtKB-UniRule"/>
</dbReference>
<dbReference type="GO" id="GO:0004826">
    <property type="term" value="F:phenylalanine-tRNA ligase activity"/>
    <property type="evidence" value="ECO:0007669"/>
    <property type="project" value="UniProtKB-UniRule"/>
</dbReference>
<dbReference type="GO" id="GO:0016740">
    <property type="term" value="F:transferase activity"/>
    <property type="evidence" value="ECO:0007669"/>
    <property type="project" value="UniProtKB-ARBA"/>
</dbReference>
<dbReference type="GO" id="GO:0000049">
    <property type="term" value="F:tRNA binding"/>
    <property type="evidence" value="ECO:0007669"/>
    <property type="project" value="UniProtKB-KW"/>
</dbReference>
<dbReference type="GO" id="GO:0006432">
    <property type="term" value="P:phenylalanyl-tRNA aminoacylation"/>
    <property type="evidence" value="ECO:0007669"/>
    <property type="project" value="UniProtKB-UniRule"/>
</dbReference>
<dbReference type="CDD" id="cd00769">
    <property type="entry name" value="PheRS_beta_core"/>
    <property type="match status" value="1"/>
</dbReference>
<dbReference type="CDD" id="cd02796">
    <property type="entry name" value="tRNA_bind_bactPheRS"/>
    <property type="match status" value="1"/>
</dbReference>
<dbReference type="FunFam" id="2.40.50.140:FF:000045">
    <property type="entry name" value="Phenylalanine--tRNA ligase beta subunit"/>
    <property type="match status" value="1"/>
</dbReference>
<dbReference type="FunFam" id="3.30.56.10:FF:000002">
    <property type="entry name" value="Phenylalanine--tRNA ligase beta subunit"/>
    <property type="match status" value="1"/>
</dbReference>
<dbReference type="FunFam" id="3.30.70.380:FF:000001">
    <property type="entry name" value="Phenylalanine--tRNA ligase beta subunit"/>
    <property type="match status" value="1"/>
</dbReference>
<dbReference type="FunFam" id="3.30.930.10:FF:000022">
    <property type="entry name" value="Phenylalanine--tRNA ligase beta subunit"/>
    <property type="match status" value="1"/>
</dbReference>
<dbReference type="FunFam" id="3.50.40.10:FF:000001">
    <property type="entry name" value="Phenylalanine--tRNA ligase beta subunit"/>
    <property type="match status" value="1"/>
</dbReference>
<dbReference type="Gene3D" id="3.30.56.10">
    <property type="match status" value="2"/>
</dbReference>
<dbReference type="Gene3D" id="3.30.930.10">
    <property type="entry name" value="Bira Bifunctional Protein, Domain 2"/>
    <property type="match status" value="1"/>
</dbReference>
<dbReference type="Gene3D" id="3.30.70.380">
    <property type="entry name" value="Ferrodoxin-fold anticodon-binding domain"/>
    <property type="match status" value="1"/>
</dbReference>
<dbReference type="Gene3D" id="2.40.50.140">
    <property type="entry name" value="Nucleic acid-binding proteins"/>
    <property type="match status" value="1"/>
</dbReference>
<dbReference type="Gene3D" id="3.50.40.10">
    <property type="entry name" value="Phenylalanyl-trna Synthetase, Chain B, domain 3"/>
    <property type="match status" value="1"/>
</dbReference>
<dbReference type="HAMAP" id="MF_00283">
    <property type="entry name" value="Phe_tRNA_synth_beta1"/>
    <property type="match status" value="1"/>
</dbReference>
<dbReference type="InterPro" id="IPR045864">
    <property type="entry name" value="aa-tRNA-synth_II/BPL/LPL"/>
</dbReference>
<dbReference type="InterPro" id="IPR005146">
    <property type="entry name" value="B3/B4_tRNA-bd"/>
</dbReference>
<dbReference type="InterPro" id="IPR009061">
    <property type="entry name" value="DNA-bd_dom_put_sf"/>
</dbReference>
<dbReference type="InterPro" id="IPR005121">
    <property type="entry name" value="Fdx_antiC-bd"/>
</dbReference>
<dbReference type="InterPro" id="IPR036690">
    <property type="entry name" value="Fdx_antiC-bd_sf"/>
</dbReference>
<dbReference type="InterPro" id="IPR012340">
    <property type="entry name" value="NA-bd_OB-fold"/>
</dbReference>
<dbReference type="InterPro" id="IPR045060">
    <property type="entry name" value="Phe-tRNA-ligase_IIc_bsu"/>
</dbReference>
<dbReference type="InterPro" id="IPR004532">
    <property type="entry name" value="Phe-tRNA-ligase_IIc_bsu_bact"/>
</dbReference>
<dbReference type="InterPro" id="IPR020825">
    <property type="entry name" value="Phe-tRNA_synthase-like_B3/B4"/>
</dbReference>
<dbReference type="InterPro" id="IPR041616">
    <property type="entry name" value="PheRS_beta_core"/>
</dbReference>
<dbReference type="InterPro" id="IPR002547">
    <property type="entry name" value="tRNA-bd_dom"/>
</dbReference>
<dbReference type="InterPro" id="IPR033714">
    <property type="entry name" value="tRNA_bind_bactPheRS"/>
</dbReference>
<dbReference type="InterPro" id="IPR005147">
    <property type="entry name" value="tRNA_synthase_B5-dom"/>
</dbReference>
<dbReference type="NCBIfam" id="TIGR00472">
    <property type="entry name" value="pheT_bact"/>
    <property type="match status" value="1"/>
</dbReference>
<dbReference type="NCBIfam" id="NF045760">
    <property type="entry name" value="YtpR"/>
    <property type="match status" value="1"/>
</dbReference>
<dbReference type="PANTHER" id="PTHR10947:SF0">
    <property type="entry name" value="PHENYLALANINE--TRNA LIGASE BETA SUBUNIT"/>
    <property type="match status" value="1"/>
</dbReference>
<dbReference type="PANTHER" id="PTHR10947">
    <property type="entry name" value="PHENYLALANYL-TRNA SYNTHETASE BETA CHAIN AND LEUCINE-RICH REPEAT-CONTAINING PROTEIN 47"/>
    <property type="match status" value="1"/>
</dbReference>
<dbReference type="Pfam" id="PF03483">
    <property type="entry name" value="B3_4"/>
    <property type="match status" value="1"/>
</dbReference>
<dbReference type="Pfam" id="PF03484">
    <property type="entry name" value="B5"/>
    <property type="match status" value="1"/>
</dbReference>
<dbReference type="Pfam" id="PF03147">
    <property type="entry name" value="FDX-ACB"/>
    <property type="match status" value="1"/>
</dbReference>
<dbReference type="Pfam" id="PF01588">
    <property type="entry name" value="tRNA_bind"/>
    <property type="match status" value="1"/>
</dbReference>
<dbReference type="Pfam" id="PF17759">
    <property type="entry name" value="tRNA_synthFbeta"/>
    <property type="match status" value="1"/>
</dbReference>
<dbReference type="SMART" id="SM00873">
    <property type="entry name" value="B3_4"/>
    <property type="match status" value="1"/>
</dbReference>
<dbReference type="SMART" id="SM00874">
    <property type="entry name" value="B5"/>
    <property type="match status" value="1"/>
</dbReference>
<dbReference type="SMART" id="SM00896">
    <property type="entry name" value="FDX-ACB"/>
    <property type="match status" value="1"/>
</dbReference>
<dbReference type="SUPFAM" id="SSF54991">
    <property type="entry name" value="Anticodon-binding domain of PheRS"/>
    <property type="match status" value="1"/>
</dbReference>
<dbReference type="SUPFAM" id="SSF55681">
    <property type="entry name" value="Class II aaRS and biotin synthetases"/>
    <property type="match status" value="1"/>
</dbReference>
<dbReference type="SUPFAM" id="SSF50249">
    <property type="entry name" value="Nucleic acid-binding proteins"/>
    <property type="match status" value="1"/>
</dbReference>
<dbReference type="SUPFAM" id="SSF56037">
    <property type="entry name" value="PheT/TilS domain"/>
    <property type="match status" value="1"/>
</dbReference>
<dbReference type="SUPFAM" id="SSF46955">
    <property type="entry name" value="Putative DNA-binding domain"/>
    <property type="match status" value="1"/>
</dbReference>
<dbReference type="PROSITE" id="PS51483">
    <property type="entry name" value="B5"/>
    <property type="match status" value="1"/>
</dbReference>
<dbReference type="PROSITE" id="PS51447">
    <property type="entry name" value="FDX_ACB"/>
    <property type="match status" value="1"/>
</dbReference>
<dbReference type="PROSITE" id="PS50886">
    <property type="entry name" value="TRBD"/>
    <property type="match status" value="1"/>
</dbReference>
<reference key="1">
    <citation type="journal article" date="2004" name="Nucleic Acids Res.">
        <title>Thermoadaptation trait revealed by the genome sequence of thermophilic Geobacillus kaustophilus.</title>
        <authorList>
            <person name="Takami H."/>
            <person name="Takaki Y."/>
            <person name="Chee G.-J."/>
            <person name="Nishi S."/>
            <person name="Shimamura S."/>
            <person name="Suzuki H."/>
            <person name="Matsui S."/>
            <person name="Uchiyama I."/>
        </authorList>
    </citation>
    <scope>NUCLEOTIDE SEQUENCE [LARGE SCALE GENOMIC DNA]</scope>
    <source>
        <strain>HTA426</strain>
    </source>
</reference>
<sequence length="804" mass="88467">MLVSYRWLGEYVDLTGITAKELAERITKSGIEVERVEALDRGMKGVVIGHVLECEPHPNADKLRKCLVDLGEDEPVQIICGAPNVAKGQKVAVAKVGAVLPGNFKIKRAKLRGEESNGMICSLQELGVETKVVPKEYADGIFVFPSDAPIGADAIEWLGLHDEVLELSLTPNRADCLSMIGVAYEVAAILGRDVKLPEAAVKENSEHVHEYISVRVEAPEDNPLYAGRIVKNVRIGPSPLWMQARLMAAGIRPHNNVVDITNYILLEYGQPLHAFDYDRLGSKEIVVRRAKAGETIITLDDVERKLTEEHLVITNGREPVALAGVMGGANSEVRDDTTTVFIEAAYFTSPVIRQAVKDHGLRSEASTRFEKGIDPARTKEALERAAALMSEYAGGEVVGGIVEASVWRQDSVVVTVTLERINGVLGTAMSKEEVAAILSNLQFPFTEDNGTFTIHVPSRRRDIAIEEDIIEEVARLYGYDRLPATLPVAEAKPGGLTPYQAKRRRVRRYLEGAGLFQAITYSLTSPDKATRFALETAEPIRLALPMSEERSVLRQSLIPHLLEAASYNRARQVENVALYEIGSVYLSKGEHVQPAENERLAGVLTGLWHAHLWQGEKKAADFYVAKGILDGLFDLFGLAARIEYKPAKRADLHPGRTAEIALGGKVIGFVGQLHPAVQKEYDLKETYVFELALTDLLNAESEAIRYEPIPRFPSVVRDIALVVDENVEAGALKQAIEEAGKPLVKDVSLFDVYKGDRLPDGKKSLAFSLRYYDPERTLTDEEVAAVHERVLAAVEKQFGAVLRG</sequence>
<accession>Q5KWE5</accession>
<gene>
    <name evidence="1" type="primary">pheT</name>
    <name type="ordered locus">GK2706</name>
</gene>
<organism>
    <name type="scientific">Geobacillus kaustophilus (strain HTA426)</name>
    <dbReference type="NCBI Taxonomy" id="235909"/>
    <lineage>
        <taxon>Bacteria</taxon>
        <taxon>Bacillati</taxon>
        <taxon>Bacillota</taxon>
        <taxon>Bacilli</taxon>
        <taxon>Bacillales</taxon>
        <taxon>Anoxybacillaceae</taxon>
        <taxon>Geobacillus</taxon>
        <taxon>Geobacillus thermoleovorans group</taxon>
    </lineage>
</organism>